<organism>
    <name type="scientific">Mus musculus</name>
    <name type="common">Mouse</name>
    <dbReference type="NCBI Taxonomy" id="10090"/>
    <lineage>
        <taxon>Eukaryota</taxon>
        <taxon>Metazoa</taxon>
        <taxon>Chordata</taxon>
        <taxon>Craniata</taxon>
        <taxon>Vertebrata</taxon>
        <taxon>Euteleostomi</taxon>
        <taxon>Mammalia</taxon>
        <taxon>Eutheria</taxon>
        <taxon>Euarchontoglires</taxon>
        <taxon>Glires</taxon>
        <taxon>Rodentia</taxon>
        <taxon>Myomorpha</taxon>
        <taxon>Muroidea</taxon>
        <taxon>Muridae</taxon>
        <taxon>Murinae</taxon>
        <taxon>Mus</taxon>
        <taxon>Mus</taxon>
    </lineage>
</organism>
<feature type="signal peptide" evidence="2">
    <location>
        <begin position="1"/>
        <end position="24"/>
    </location>
</feature>
<feature type="chain" id="PRO_0000013063" description="Glutathione peroxidase 3">
    <location>
        <begin position="25"/>
        <end position="226"/>
    </location>
</feature>
<feature type="active site">
    <location>
        <position position="73"/>
    </location>
</feature>
<feature type="non-standard amino acid" description="Selenocysteine">
    <location>
        <position position="73"/>
    </location>
</feature>
<feature type="sequence conflict" description="In Ref. 4." evidence="3" ref="4">
    <original>RA</original>
    <variation>Q</variation>
    <location>
        <begin position="6"/>
        <end position="7"/>
    </location>
</feature>
<feature type="sequence conflict" description="In Ref. 4." evidence="3" ref="4">
    <original>P</original>
    <variation>A</variation>
    <location>
        <position position="21"/>
    </location>
</feature>
<feature type="sequence conflict" description="In Ref. 4." evidence="3" ref="4">
    <original>GQEKSK</original>
    <variation>DKRSLR</variation>
    <location>
        <begin position="24"/>
        <end position="29"/>
    </location>
</feature>
<name>GPX3_MOUSE</name>
<sequence>MARILRASCLLSLLLAGFVPPGRGQEKSKTDCHGGMSGTIYEYGALTIDGEEYIPFKQYAGKYILFVNVASYUGLTDQYLELNALQEELGPFGLVILGFPSNQFGKQEPGENSEILPSLKYVRPGGGFVPNFQLFEKGDVNGEKEQKFYTFLKNSCPPTAELLGSPGRLFWEPMKIHDIRWNFEKFLVGPDGIPVMRWYHRTTVSNVKMDILSYMRRQAALSARGK</sequence>
<reference key="1">
    <citation type="journal article" date="1994" name="J. Biol. Chem.">
        <title>Mouse plasma glutathione peroxidase. cDNA sequence analysis and renal proximal tubular expression and secretion.</title>
        <authorList>
            <person name="Maser R.L."/>
            <person name="Magenheimer B.S."/>
            <person name="Calvet J.P."/>
        </authorList>
    </citation>
    <scope>NUCLEOTIDE SEQUENCE [MRNA]</scope>
    <source>
        <strain>C57BL/6J</strain>
        <tissue>Kidney</tissue>
    </source>
</reference>
<reference key="2">
    <citation type="journal article" date="2005" name="Science">
        <title>The transcriptional landscape of the mammalian genome.</title>
        <authorList>
            <person name="Carninci P."/>
            <person name="Kasukawa T."/>
            <person name="Katayama S."/>
            <person name="Gough J."/>
            <person name="Frith M.C."/>
            <person name="Maeda N."/>
            <person name="Oyama R."/>
            <person name="Ravasi T."/>
            <person name="Lenhard B."/>
            <person name="Wells C."/>
            <person name="Kodzius R."/>
            <person name="Shimokawa K."/>
            <person name="Bajic V.B."/>
            <person name="Brenner S.E."/>
            <person name="Batalov S."/>
            <person name="Forrest A.R."/>
            <person name="Zavolan M."/>
            <person name="Davis M.J."/>
            <person name="Wilming L.G."/>
            <person name="Aidinis V."/>
            <person name="Allen J.E."/>
            <person name="Ambesi-Impiombato A."/>
            <person name="Apweiler R."/>
            <person name="Aturaliya R.N."/>
            <person name="Bailey T.L."/>
            <person name="Bansal M."/>
            <person name="Baxter L."/>
            <person name="Beisel K.W."/>
            <person name="Bersano T."/>
            <person name="Bono H."/>
            <person name="Chalk A.M."/>
            <person name="Chiu K.P."/>
            <person name="Choudhary V."/>
            <person name="Christoffels A."/>
            <person name="Clutterbuck D.R."/>
            <person name="Crowe M.L."/>
            <person name="Dalla E."/>
            <person name="Dalrymple B.P."/>
            <person name="de Bono B."/>
            <person name="Della Gatta G."/>
            <person name="di Bernardo D."/>
            <person name="Down T."/>
            <person name="Engstrom P."/>
            <person name="Fagiolini M."/>
            <person name="Faulkner G."/>
            <person name="Fletcher C.F."/>
            <person name="Fukushima T."/>
            <person name="Furuno M."/>
            <person name="Futaki S."/>
            <person name="Gariboldi M."/>
            <person name="Georgii-Hemming P."/>
            <person name="Gingeras T.R."/>
            <person name="Gojobori T."/>
            <person name="Green R.E."/>
            <person name="Gustincich S."/>
            <person name="Harbers M."/>
            <person name="Hayashi Y."/>
            <person name="Hensch T.K."/>
            <person name="Hirokawa N."/>
            <person name="Hill D."/>
            <person name="Huminiecki L."/>
            <person name="Iacono M."/>
            <person name="Ikeo K."/>
            <person name="Iwama A."/>
            <person name="Ishikawa T."/>
            <person name="Jakt M."/>
            <person name="Kanapin A."/>
            <person name="Katoh M."/>
            <person name="Kawasawa Y."/>
            <person name="Kelso J."/>
            <person name="Kitamura H."/>
            <person name="Kitano H."/>
            <person name="Kollias G."/>
            <person name="Krishnan S.P."/>
            <person name="Kruger A."/>
            <person name="Kummerfeld S.K."/>
            <person name="Kurochkin I.V."/>
            <person name="Lareau L.F."/>
            <person name="Lazarevic D."/>
            <person name="Lipovich L."/>
            <person name="Liu J."/>
            <person name="Liuni S."/>
            <person name="McWilliam S."/>
            <person name="Madan Babu M."/>
            <person name="Madera M."/>
            <person name="Marchionni L."/>
            <person name="Matsuda H."/>
            <person name="Matsuzawa S."/>
            <person name="Miki H."/>
            <person name="Mignone F."/>
            <person name="Miyake S."/>
            <person name="Morris K."/>
            <person name="Mottagui-Tabar S."/>
            <person name="Mulder N."/>
            <person name="Nakano N."/>
            <person name="Nakauchi H."/>
            <person name="Ng P."/>
            <person name="Nilsson R."/>
            <person name="Nishiguchi S."/>
            <person name="Nishikawa S."/>
            <person name="Nori F."/>
            <person name="Ohara O."/>
            <person name="Okazaki Y."/>
            <person name="Orlando V."/>
            <person name="Pang K.C."/>
            <person name="Pavan W.J."/>
            <person name="Pavesi G."/>
            <person name="Pesole G."/>
            <person name="Petrovsky N."/>
            <person name="Piazza S."/>
            <person name="Reed J."/>
            <person name="Reid J.F."/>
            <person name="Ring B.Z."/>
            <person name="Ringwald M."/>
            <person name="Rost B."/>
            <person name="Ruan Y."/>
            <person name="Salzberg S.L."/>
            <person name="Sandelin A."/>
            <person name="Schneider C."/>
            <person name="Schoenbach C."/>
            <person name="Sekiguchi K."/>
            <person name="Semple C.A."/>
            <person name="Seno S."/>
            <person name="Sessa L."/>
            <person name="Sheng Y."/>
            <person name="Shibata Y."/>
            <person name="Shimada H."/>
            <person name="Shimada K."/>
            <person name="Silva D."/>
            <person name="Sinclair B."/>
            <person name="Sperling S."/>
            <person name="Stupka E."/>
            <person name="Sugiura K."/>
            <person name="Sultana R."/>
            <person name="Takenaka Y."/>
            <person name="Taki K."/>
            <person name="Tammoja K."/>
            <person name="Tan S.L."/>
            <person name="Tang S."/>
            <person name="Taylor M.S."/>
            <person name="Tegner J."/>
            <person name="Teichmann S.A."/>
            <person name="Ueda H.R."/>
            <person name="van Nimwegen E."/>
            <person name="Verardo R."/>
            <person name="Wei C.L."/>
            <person name="Yagi K."/>
            <person name="Yamanishi H."/>
            <person name="Zabarovsky E."/>
            <person name="Zhu S."/>
            <person name="Zimmer A."/>
            <person name="Hide W."/>
            <person name="Bult C."/>
            <person name="Grimmond S.M."/>
            <person name="Teasdale R.D."/>
            <person name="Liu E.T."/>
            <person name="Brusic V."/>
            <person name="Quackenbush J."/>
            <person name="Wahlestedt C."/>
            <person name="Mattick J.S."/>
            <person name="Hume D.A."/>
            <person name="Kai C."/>
            <person name="Sasaki D."/>
            <person name="Tomaru Y."/>
            <person name="Fukuda S."/>
            <person name="Kanamori-Katayama M."/>
            <person name="Suzuki M."/>
            <person name="Aoki J."/>
            <person name="Arakawa T."/>
            <person name="Iida J."/>
            <person name="Imamura K."/>
            <person name="Itoh M."/>
            <person name="Kato T."/>
            <person name="Kawaji H."/>
            <person name="Kawagashira N."/>
            <person name="Kawashima T."/>
            <person name="Kojima M."/>
            <person name="Kondo S."/>
            <person name="Konno H."/>
            <person name="Nakano K."/>
            <person name="Ninomiya N."/>
            <person name="Nishio T."/>
            <person name="Okada M."/>
            <person name="Plessy C."/>
            <person name="Shibata K."/>
            <person name="Shiraki T."/>
            <person name="Suzuki S."/>
            <person name="Tagami M."/>
            <person name="Waki K."/>
            <person name="Watahiki A."/>
            <person name="Okamura-Oho Y."/>
            <person name="Suzuki H."/>
            <person name="Kawai J."/>
            <person name="Hayashizaki Y."/>
        </authorList>
    </citation>
    <scope>NUCLEOTIDE SEQUENCE [LARGE SCALE MRNA]</scope>
    <source>
        <strain>C57BL/6J</strain>
        <tissue>Heart</tissue>
        <tissue>Kidney</tissue>
        <tissue>Liver</tissue>
    </source>
</reference>
<reference key="3">
    <citation type="journal article" date="2004" name="Genome Res.">
        <title>The status, quality, and expansion of the NIH full-length cDNA project: the Mammalian Gene Collection (MGC).</title>
        <authorList>
            <consortium name="The MGC Project Team"/>
        </authorList>
    </citation>
    <scope>NUCLEOTIDE SEQUENCE [LARGE SCALE MRNA]</scope>
    <source>
        <strain>FVB/N</strain>
        <strain>NMRI</strain>
        <tissue>Colon</tissue>
        <tissue>Kidney</tissue>
        <tissue>Mammary tumor</tissue>
    </source>
</reference>
<reference key="4">
    <citation type="journal article" date="1995" name="Gene">
        <title>Cloning of the mouse gene encoding plasma glutathione peroxidase: organization, sequence and chromosomal localization.</title>
        <authorList>
            <person name="Schwaab V."/>
            <person name="Baud E."/>
            <person name="Ghyselinck N.B."/>
            <person name="Mattei M.-G."/>
            <person name="Dufaure J.-P."/>
            <person name="Drevet J.R."/>
        </authorList>
    </citation>
    <scope>NUCLEOTIDE SEQUENCE [GENOMIC DNA] OF 1-29</scope>
</reference>
<reference key="5">
    <citation type="journal article" date="2010" name="Cell">
        <title>A tissue-specific atlas of mouse protein phosphorylation and expression.</title>
        <authorList>
            <person name="Huttlin E.L."/>
            <person name="Jedrychowski M.P."/>
            <person name="Elias J.E."/>
            <person name="Goswami T."/>
            <person name="Rad R."/>
            <person name="Beausoleil S.A."/>
            <person name="Villen J."/>
            <person name="Haas W."/>
            <person name="Sowa M.E."/>
            <person name="Gygi S.P."/>
        </authorList>
    </citation>
    <scope>IDENTIFICATION BY MASS SPECTROMETRY [LARGE SCALE ANALYSIS]</scope>
    <source>
        <tissue>Brown adipose tissue</tissue>
        <tissue>Heart</tissue>
        <tissue>Kidney</tissue>
        <tissue>Lung</tissue>
        <tissue>Spleen</tissue>
        <tissue>Testis</tissue>
    </source>
</reference>
<comment type="function">
    <text evidence="1">Protects cells and enzymes from oxidative damage, by catalyzing the reduction of hydrogen peroxide, lipid peroxides and organic hydroperoxide, by glutathione.</text>
</comment>
<comment type="catalytic activity">
    <reaction evidence="1">
        <text>2 glutathione + H2O2 = glutathione disulfide + 2 H2O</text>
        <dbReference type="Rhea" id="RHEA:16833"/>
        <dbReference type="ChEBI" id="CHEBI:15377"/>
        <dbReference type="ChEBI" id="CHEBI:16240"/>
        <dbReference type="ChEBI" id="CHEBI:57925"/>
        <dbReference type="ChEBI" id="CHEBI:58297"/>
        <dbReference type="EC" id="1.11.1.9"/>
    </reaction>
</comment>
<comment type="catalytic activity">
    <reaction evidence="1">
        <text>tert-butyl hydroperoxide + 2 glutathione = tert-butanol + glutathione disulfide + H2O</text>
        <dbReference type="Rhea" id="RHEA:69412"/>
        <dbReference type="ChEBI" id="CHEBI:15377"/>
        <dbReference type="ChEBI" id="CHEBI:45895"/>
        <dbReference type="ChEBI" id="CHEBI:57925"/>
        <dbReference type="ChEBI" id="CHEBI:58297"/>
        <dbReference type="ChEBI" id="CHEBI:64090"/>
    </reaction>
</comment>
<comment type="subunit">
    <text>Homotetramer.</text>
</comment>
<comment type="subcellular location">
    <subcellularLocation>
        <location>Secreted</location>
    </subcellularLocation>
</comment>
<comment type="tissue specificity">
    <text>Secreted in plasma.</text>
</comment>
<comment type="similarity">
    <text evidence="3">Belongs to the glutathione peroxidase family.</text>
</comment>
<protein>
    <recommendedName>
        <fullName evidence="3">Glutathione peroxidase 3</fullName>
        <shortName>GPx-3</shortName>
        <shortName>GSHPx-3</shortName>
        <ecNumber evidence="1">1.11.1.9</ecNumber>
    </recommendedName>
    <alternativeName>
        <fullName>Plasma glutathione peroxidase</fullName>
        <shortName>GPx-P</shortName>
        <shortName>GSHPx-P</shortName>
    </alternativeName>
</protein>
<evidence type="ECO:0000250" key="1">
    <source>
        <dbReference type="UniProtKB" id="P22352"/>
    </source>
</evidence>
<evidence type="ECO:0000255" key="2"/>
<evidence type="ECO:0000305" key="3"/>
<evidence type="ECO:0000312" key="4">
    <source>
        <dbReference type="MGI" id="MGI:105102"/>
    </source>
</evidence>
<dbReference type="EC" id="1.11.1.9" evidence="1"/>
<dbReference type="EMBL" id="U13705">
    <property type="protein sequence ID" value="AAA62283.2"/>
    <property type="molecule type" value="mRNA"/>
</dbReference>
<dbReference type="EMBL" id="AK002219">
    <property type="protein sequence ID" value="BAC55243.1"/>
    <property type="molecule type" value="mRNA"/>
</dbReference>
<dbReference type="EMBL" id="AK004942">
    <property type="protein sequence ID" value="BAC55250.1"/>
    <property type="molecule type" value="mRNA"/>
</dbReference>
<dbReference type="EMBL" id="AK146760">
    <property type="protein sequence ID" value="BAE27413.1"/>
    <property type="molecule type" value="mRNA"/>
</dbReference>
<dbReference type="EMBL" id="BC003339">
    <property type="protein sequence ID" value="AAH03339.1"/>
    <property type="molecule type" value="mRNA"/>
</dbReference>
<dbReference type="EMBL" id="BC037027">
    <property type="protein sequence ID" value="AAH37027.1"/>
    <property type="molecule type" value="mRNA"/>
</dbReference>
<dbReference type="EMBL" id="BC049235">
    <property type="protein sequence ID" value="AAH49235.1"/>
    <property type="molecule type" value="mRNA"/>
</dbReference>
<dbReference type="EMBL" id="BC061950">
    <property type="protein sequence ID" value="AAH61950.1"/>
    <property type="molecule type" value="mRNA"/>
</dbReference>
<dbReference type="EMBL" id="X84742">
    <property type="status" value="NOT_ANNOTATED_CDS"/>
    <property type="molecule type" value="Genomic_DNA"/>
</dbReference>
<dbReference type="CCDS" id="CCDS24703.1"/>
<dbReference type="PIR" id="A55086">
    <property type="entry name" value="A55086"/>
</dbReference>
<dbReference type="RefSeq" id="NP_001316789.1">
    <property type="nucleotide sequence ID" value="NM_001329860.1"/>
</dbReference>
<dbReference type="RefSeq" id="NP_032187.2">
    <property type="nucleotide sequence ID" value="NM_008161.4"/>
</dbReference>
<dbReference type="BioGRID" id="200040">
    <property type="interactions" value="3"/>
</dbReference>
<dbReference type="FunCoup" id="P46412">
    <property type="interactions" value="246"/>
</dbReference>
<dbReference type="IntAct" id="P46412">
    <property type="interactions" value="1"/>
</dbReference>
<dbReference type="STRING" id="10090.ENSMUSP00000081011"/>
<dbReference type="PeroxiBase" id="3711">
    <property type="entry name" value="MmGPx03"/>
</dbReference>
<dbReference type="iPTMnet" id="P46412"/>
<dbReference type="PhosphoSitePlus" id="P46412"/>
<dbReference type="SwissPalm" id="P46412"/>
<dbReference type="CPTAC" id="non-CPTAC-3540"/>
<dbReference type="jPOST" id="P46412"/>
<dbReference type="PaxDb" id="10090-ENSMUSP00000081011"/>
<dbReference type="PeptideAtlas" id="P46412"/>
<dbReference type="ProteomicsDB" id="271014"/>
<dbReference type="Antibodypedia" id="8091">
    <property type="antibodies" value="269 antibodies from 31 providers"/>
</dbReference>
<dbReference type="DNASU" id="14778"/>
<dbReference type="Ensembl" id="ENSMUST00000082430.11">
    <property type="protein sequence ID" value="ENSMUSP00000081011.5"/>
    <property type="gene ID" value="ENSMUSG00000018339.13"/>
</dbReference>
<dbReference type="GeneID" id="14778"/>
<dbReference type="KEGG" id="mmu:14778"/>
<dbReference type="UCSC" id="uc007iyk.2">
    <property type="organism name" value="mouse"/>
</dbReference>
<dbReference type="AGR" id="MGI:105102"/>
<dbReference type="CTD" id="2878"/>
<dbReference type="MGI" id="MGI:105102">
    <property type="gene designation" value="Gpx3"/>
</dbReference>
<dbReference type="VEuPathDB" id="HostDB:ENSMUSG00000018339"/>
<dbReference type="eggNOG" id="KOG1651">
    <property type="taxonomic scope" value="Eukaryota"/>
</dbReference>
<dbReference type="GeneTree" id="ENSGT00940000161754"/>
<dbReference type="InParanoid" id="P46412"/>
<dbReference type="OMA" id="GRPIMRW"/>
<dbReference type="OrthoDB" id="446890at2759"/>
<dbReference type="PhylomeDB" id="P46412"/>
<dbReference type="TreeFam" id="TF105318"/>
<dbReference type="Reactome" id="R-MMU-3299685">
    <property type="pathway name" value="Detoxification of Reactive Oxygen Species"/>
</dbReference>
<dbReference type="BioGRID-ORCS" id="14778">
    <property type="hits" value="5 hits in 80 CRISPR screens"/>
</dbReference>
<dbReference type="ChiTaRS" id="Gpx3">
    <property type="organism name" value="mouse"/>
</dbReference>
<dbReference type="PRO" id="PR:P46412"/>
<dbReference type="Proteomes" id="UP000000589">
    <property type="component" value="Chromosome 11"/>
</dbReference>
<dbReference type="RNAct" id="P46412">
    <property type="molecule type" value="protein"/>
</dbReference>
<dbReference type="Bgee" id="ENSMUSG00000018339">
    <property type="expression patterns" value="Expressed in right kidney and 278 other cell types or tissues"/>
</dbReference>
<dbReference type="ExpressionAtlas" id="P46412">
    <property type="expression patterns" value="baseline and differential"/>
</dbReference>
<dbReference type="GO" id="GO:0005615">
    <property type="term" value="C:extracellular space"/>
    <property type="evidence" value="ECO:0007005"/>
    <property type="project" value="BHF-UCL"/>
</dbReference>
<dbReference type="GO" id="GO:0004602">
    <property type="term" value="F:glutathione peroxidase activity"/>
    <property type="evidence" value="ECO:0000314"/>
    <property type="project" value="MGI"/>
</dbReference>
<dbReference type="GO" id="GO:0042802">
    <property type="term" value="F:identical protein binding"/>
    <property type="evidence" value="ECO:0000250"/>
    <property type="project" value="UniProtKB"/>
</dbReference>
<dbReference type="GO" id="GO:0008430">
    <property type="term" value="F:selenium binding"/>
    <property type="evidence" value="ECO:0000250"/>
    <property type="project" value="UniProtKB"/>
</dbReference>
<dbReference type="GO" id="GO:0042744">
    <property type="term" value="P:hydrogen peroxide catabolic process"/>
    <property type="evidence" value="ECO:0000314"/>
    <property type="project" value="MGI"/>
</dbReference>
<dbReference type="GO" id="GO:0006979">
    <property type="term" value="P:response to oxidative stress"/>
    <property type="evidence" value="ECO:0007669"/>
    <property type="project" value="InterPro"/>
</dbReference>
<dbReference type="CDD" id="cd00340">
    <property type="entry name" value="GSH_Peroxidase"/>
    <property type="match status" value="1"/>
</dbReference>
<dbReference type="FunFam" id="3.40.30.10:FF:000112">
    <property type="entry name" value="Glutathione peroxidase"/>
    <property type="match status" value="1"/>
</dbReference>
<dbReference type="Gene3D" id="3.40.30.10">
    <property type="entry name" value="Glutaredoxin"/>
    <property type="match status" value="1"/>
</dbReference>
<dbReference type="InterPro" id="IPR000889">
    <property type="entry name" value="Glutathione_peroxidase"/>
</dbReference>
<dbReference type="InterPro" id="IPR029759">
    <property type="entry name" value="GPX_AS"/>
</dbReference>
<dbReference type="InterPro" id="IPR029760">
    <property type="entry name" value="GPX_CS"/>
</dbReference>
<dbReference type="InterPro" id="IPR036249">
    <property type="entry name" value="Thioredoxin-like_sf"/>
</dbReference>
<dbReference type="PANTHER" id="PTHR11592">
    <property type="entry name" value="GLUTATHIONE PEROXIDASE"/>
    <property type="match status" value="1"/>
</dbReference>
<dbReference type="PANTHER" id="PTHR11592:SF32">
    <property type="entry name" value="GLUTATHIONE PEROXIDASE 3"/>
    <property type="match status" value="1"/>
</dbReference>
<dbReference type="Pfam" id="PF00255">
    <property type="entry name" value="GSHPx"/>
    <property type="match status" value="1"/>
</dbReference>
<dbReference type="PIRSF" id="PIRSF000303">
    <property type="entry name" value="Glutathion_perox"/>
    <property type="match status" value="1"/>
</dbReference>
<dbReference type="PRINTS" id="PR01011">
    <property type="entry name" value="GLUTPROXDASE"/>
</dbReference>
<dbReference type="SUPFAM" id="SSF52833">
    <property type="entry name" value="Thioredoxin-like"/>
    <property type="match status" value="1"/>
</dbReference>
<dbReference type="PROSITE" id="PS00460">
    <property type="entry name" value="GLUTATHIONE_PEROXID_1"/>
    <property type="match status" value="1"/>
</dbReference>
<dbReference type="PROSITE" id="PS00763">
    <property type="entry name" value="GLUTATHIONE_PEROXID_2"/>
    <property type="match status" value="1"/>
</dbReference>
<dbReference type="PROSITE" id="PS51355">
    <property type="entry name" value="GLUTATHIONE_PEROXID_3"/>
    <property type="match status" value="1"/>
</dbReference>
<gene>
    <name evidence="4" type="primary">Gpx3</name>
</gene>
<accession>P46412</accession>
<accession>Q5XKR0</accession>
<keyword id="KW-0560">Oxidoreductase</keyword>
<keyword id="KW-0575">Peroxidase</keyword>
<keyword id="KW-1185">Reference proteome</keyword>
<keyword id="KW-0964">Secreted</keyword>
<keyword id="KW-0712">Selenocysteine</keyword>
<keyword id="KW-0732">Signal</keyword>
<proteinExistence type="evidence at protein level"/>